<protein>
    <recommendedName>
        <fullName evidence="1">Proline--tRNA ligase</fullName>
        <ecNumber evidence="1">6.1.1.15</ecNumber>
    </recommendedName>
    <alternativeName>
        <fullName evidence="1">Prolyl-tRNA synthetase</fullName>
        <shortName evidence="1">ProRS</shortName>
    </alternativeName>
</protein>
<comment type="function">
    <text evidence="1">Catalyzes the attachment of proline to tRNA(Pro) in a two-step reaction: proline is first activated by ATP to form Pro-AMP and then transferred to the acceptor end of tRNA(Pro). As ProRS can inadvertently accommodate and process non-cognate amino acids such as alanine and cysteine, to avoid such errors it has two additional distinct editing activities against alanine. One activity is designated as 'pretransfer' editing and involves the tRNA(Pro)-independent hydrolysis of activated Ala-AMP. The other activity is designated 'posttransfer' editing and involves deacylation of mischarged Ala-tRNA(Pro). The misacylated Cys-tRNA(Pro) is not edited by ProRS.</text>
</comment>
<comment type="catalytic activity">
    <reaction evidence="1">
        <text>tRNA(Pro) + L-proline + ATP = L-prolyl-tRNA(Pro) + AMP + diphosphate</text>
        <dbReference type="Rhea" id="RHEA:14305"/>
        <dbReference type="Rhea" id="RHEA-COMP:9700"/>
        <dbReference type="Rhea" id="RHEA-COMP:9702"/>
        <dbReference type="ChEBI" id="CHEBI:30616"/>
        <dbReference type="ChEBI" id="CHEBI:33019"/>
        <dbReference type="ChEBI" id="CHEBI:60039"/>
        <dbReference type="ChEBI" id="CHEBI:78442"/>
        <dbReference type="ChEBI" id="CHEBI:78532"/>
        <dbReference type="ChEBI" id="CHEBI:456215"/>
        <dbReference type="EC" id="6.1.1.15"/>
    </reaction>
</comment>
<comment type="subunit">
    <text evidence="1">Homodimer.</text>
</comment>
<comment type="subcellular location">
    <subcellularLocation>
        <location evidence="1">Cytoplasm</location>
    </subcellularLocation>
</comment>
<comment type="domain">
    <text evidence="1">Consists of three domains: the N-terminal catalytic domain, the editing domain and the C-terminal anticodon-binding domain.</text>
</comment>
<comment type="similarity">
    <text evidence="1">Belongs to the class-II aminoacyl-tRNA synthetase family. ProS type 1 subfamily.</text>
</comment>
<gene>
    <name evidence="1" type="primary">proS</name>
    <name type="ordered locus">BCQ_3604</name>
</gene>
<name>SYP_BACCQ</name>
<feature type="chain" id="PRO_1000185487" description="Proline--tRNA ligase">
    <location>
        <begin position="1"/>
        <end position="566"/>
    </location>
</feature>
<reference key="1">
    <citation type="journal article" date="2009" name="J. Bacteriol.">
        <title>Complete genome sequence of the extremophilic Bacillus cereus strain Q1 with industrial applications.</title>
        <authorList>
            <person name="Xiong Z."/>
            <person name="Jiang Y."/>
            <person name="Qi D."/>
            <person name="Lu H."/>
            <person name="Yang F."/>
            <person name="Yang J."/>
            <person name="Chen L."/>
            <person name="Sun L."/>
            <person name="Xu X."/>
            <person name="Xue Y."/>
            <person name="Zhu Y."/>
            <person name="Jin Q."/>
        </authorList>
    </citation>
    <scope>NUCLEOTIDE SEQUENCE [LARGE SCALE GENOMIC DNA]</scope>
    <source>
        <strain>Q1</strain>
    </source>
</reference>
<proteinExistence type="inferred from homology"/>
<organism>
    <name type="scientific">Bacillus cereus (strain Q1)</name>
    <dbReference type="NCBI Taxonomy" id="361100"/>
    <lineage>
        <taxon>Bacteria</taxon>
        <taxon>Bacillati</taxon>
        <taxon>Bacillota</taxon>
        <taxon>Bacilli</taxon>
        <taxon>Bacillales</taxon>
        <taxon>Bacillaceae</taxon>
        <taxon>Bacillus</taxon>
        <taxon>Bacillus cereus group</taxon>
    </lineage>
</organism>
<evidence type="ECO:0000255" key="1">
    <source>
        <dbReference type="HAMAP-Rule" id="MF_01569"/>
    </source>
</evidence>
<sequence length="566" mass="63145">MKQSMVFSPTLREVPADAEIKSHQLLLRAGFMRQNASGIYSFLPFGLKVLHKVERIVREEMERAGAVELLMPAMQAAELWQESGRWYSYGSELMRMKDRNAREFALGATHEEVITDLVRDEVKSYKKLPLTLYQIQTKFRDEQRPRFGLLRGREFLMKDAYSFHATQESLDEVYDRLYKAYSNIFARCGLNFRAVIADSGAMGGKDTHEFMVLSDVGEDTIAYSDTSDYAANIEMAPVVATYTKSDEAEKALEKVATPDQKAIEEVSAFLNIEAEKCIKSMVFKVDEKLVVVLVRGDHEVNDVKVKNVYGASVVELASHEEVKELLHCEVGSLGPIGVTGDIEIIADHAVASIVNGCSGANEEGFHYVNVNPERDFKVSQYTDLRFIQEGDQSPDGNGTILFARGIEVGHVFKLGTRYSEAMNATFLDENGKTQPLIMGCYGIGVSRTVAAIAEQFNDENGLVWPKAVAPFHVHVIPVNMKSDAQREMGENIYNSLQEQGYEVLLDDRAERAGVKFADADLFGLPVRVTVGKKADEGIVEVKVRATGESEEVKVEELQTYIANILK</sequence>
<dbReference type="EC" id="6.1.1.15" evidence="1"/>
<dbReference type="EMBL" id="CP000227">
    <property type="protein sequence ID" value="ACM14032.1"/>
    <property type="molecule type" value="Genomic_DNA"/>
</dbReference>
<dbReference type="SMR" id="B9IVA8"/>
<dbReference type="KEGG" id="bcq:BCQ_3604"/>
<dbReference type="HOGENOM" id="CLU_016739_0_0_9"/>
<dbReference type="Proteomes" id="UP000000441">
    <property type="component" value="Chromosome"/>
</dbReference>
<dbReference type="GO" id="GO:0005829">
    <property type="term" value="C:cytosol"/>
    <property type="evidence" value="ECO:0007669"/>
    <property type="project" value="TreeGrafter"/>
</dbReference>
<dbReference type="GO" id="GO:0002161">
    <property type="term" value="F:aminoacyl-tRNA deacylase activity"/>
    <property type="evidence" value="ECO:0007669"/>
    <property type="project" value="InterPro"/>
</dbReference>
<dbReference type="GO" id="GO:0005524">
    <property type="term" value="F:ATP binding"/>
    <property type="evidence" value="ECO:0007669"/>
    <property type="project" value="UniProtKB-UniRule"/>
</dbReference>
<dbReference type="GO" id="GO:0140096">
    <property type="term" value="F:catalytic activity, acting on a protein"/>
    <property type="evidence" value="ECO:0007669"/>
    <property type="project" value="UniProtKB-ARBA"/>
</dbReference>
<dbReference type="GO" id="GO:0004827">
    <property type="term" value="F:proline-tRNA ligase activity"/>
    <property type="evidence" value="ECO:0007669"/>
    <property type="project" value="UniProtKB-UniRule"/>
</dbReference>
<dbReference type="GO" id="GO:0016740">
    <property type="term" value="F:transferase activity"/>
    <property type="evidence" value="ECO:0007669"/>
    <property type="project" value="UniProtKB-ARBA"/>
</dbReference>
<dbReference type="GO" id="GO:0006433">
    <property type="term" value="P:prolyl-tRNA aminoacylation"/>
    <property type="evidence" value="ECO:0007669"/>
    <property type="project" value="UniProtKB-UniRule"/>
</dbReference>
<dbReference type="CDD" id="cd04334">
    <property type="entry name" value="ProRS-INS"/>
    <property type="match status" value="1"/>
</dbReference>
<dbReference type="CDD" id="cd00861">
    <property type="entry name" value="ProRS_anticodon_short"/>
    <property type="match status" value="1"/>
</dbReference>
<dbReference type="CDD" id="cd00779">
    <property type="entry name" value="ProRS_core_prok"/>
    <property type="match status" value="1"/>
</dbReference>
<dbReference type="FunFam" id="3.30.930.10:FF:000043">
    <property type="entry name" value="Proline--tRNA ligase"/>
    <property type="match status" value="1"/>
</dbReference>
<dbReference type="FunFam" id="3.30.930.10:FF:000065">
    <property type="entry name" value="Proline--tRNA ligase"/>
    <property type="match status" value="1"/>
</dbReference>
<dbReference type="FunFam" id="3.40.50.800:FF:000011">
    <property type="entry name" value="Proline--tRNA ligase"/>
    <property type="match status" value="1"/>
</dbReference>
<dbReference type="Gene3D" id="3.40.50.800">
    <property type="entry name" value="Anticodon-binding domain"/>
    <property type="match status" value="1"/>
</dbReference>
<dbReference type="Gene3D" id="3.30.930.10">
    <property type="entry name" value="Bira Bifunctional Protein, Domain 2"/>
    <property type="match status" value="2"/>
</dbReference>
<dbReference type="HAMAP" id="MF_01569">
    <property type="entry name" value="Pro_tRNA_synth_type1"/>
    <property type="match status" value="1"/>
</dbReference>
<dbReference type="InterPro" id="IPR002314">
    <property type="entry name" value="aa-tRNA-synt_IIb"/>
</dbReference>
<dbReference type="InterPro" id="IPR006195">
    <property type="entry name" value="aa-tRNA-synth_II"/>
</dbReference>
<dbReference type="InterPro" id="IPR045864">
    <property type="entry name" value="aa-tRNA-synth_II/BPL/LPL"/>
</dbReference>
<dbReference type="InterPro" id="IPR004154">
    <property type="entry name" value="Anticodon-bd"/>
</dbReference>
<dbReference type="InterPro" id="IPR036621">
    <property type="entry name" value="Anticodon-bd_dom_sf"/>
</dbReference>
<dbReference type="InterPro" id="IPR002316">
    <property type="entry name" value="Pro-tRNA-ligase_IIa"/>
</dbReference>
<dbReference type="InterPro" id="IPR004500">
    <property type="entry name" value="Pro-tRNA-synth_IIa_bac-type"/>
</dbReference>
<dbReference type="InterPro" id="IPR023717">
    <property type="entry name" value="Pro-tRNA-Synthase_IIa_type1"/>
</dbReference>
<dbReference type="InterPro" id="IPR050062">
    <property type="entry name" value="Pro-tRNA_synthetase"/>
</dbReference>
<dbReference type="InterPro" id="IPR044140">
    <property type="entry name" value="ProRS_anticodon_short"/>
</dbReference>
<dbReference type="InterPro" id="IPR033730">
    <property type="entry name" value="ProRS_core_prok"/>
</dbReference>
<dbReference type="InterPro" id="IPR036754">
    <property type="entry name" value="YbaK/aa-tRNA-synt-asso_dom_sf"/>
</dbReference>
<dbReference type="InterPro" id="IPR007214">
    <property type="entry name" value="YbaK/aa-tRNA-synth-assoc-dom"/>
</dbReference>
<dbReference type="NCBIfam" id="NF006625">
    <property type="entry name" value="PRK09194.1"/>
    <property type="match status" value="1"/>
</dbReference>
<dbReference type="NCBIfam" id="TIGR00409">
    <property type="entry name" value="proS_fam_II"/>
    <property type="match status" value="1"/>
</dbReference>
<dbReference type="PANTHER" id="PTHR42753">
    <property type="entry name" value="MITOCHONDRIAL RIBOSOME PROTEIN L39/PROLYL-TRNA LIGASE FAMILY MEMBER"/>
    <property type="match status" value="1"/>
</dbReference>
<dbReference type="PANTHER" id="PTHR42753:SF2">
    <property type="entry name" value="PROLINE--TRNA LIGASE"/>
    <property type="match status" value="1"/>
</dbReference>
<dbReference type="Pfam" id="PF03129">
    <property type="entry name" value="HGTP_anticodon"/>
    <property type="match status" value="1"/>
</dbReference>
<dbReference type="Pfam" id="PF00587">
    <property type="entry name" value="tRNA-synt_2b"/>
    <property type="match status" value="1"/>
</dbReference>
<dbReference type="Pfam" id="PF04073">
    <property type="entry name" value="tRNA_edit"/>
    <property type="match status" value="1"/>
</dbReference>
<dbReference type="PIRSF" id="PIRSF001535">
    <property type="entry name" value="ProRS_1"/>
    <property type="match status" value="1"/>
</dbReference>
<dbReference type="PRINTS" id="PR01046">
    <property type="entry name" value="TRNASYNTHPRO"/>
</dbReference>
<dbReference type="SUPFAM" id="SSF52954">
    <property type="entry name" value="Class II aaRS ABD-related"/>
    <property type="match status" value="1"/>
</dbReference>
<dbReference type="SUPFAM" id="SSF55681">
    <property type="entry name" value="Class II aaRS and biotin synthetases"/>
    <property type="match status" value="1"/>
</dbReference>
<dbReference type="SUPFAM" id="SSF55826">
    <property type="entry name" value="YbaK/ProRS associated domain"/>
    <property type="match status" value="1"/>
</dbReference>
<dbReference type="PROSITE" id="PS50862">
    <property type="entry name" value="AA_TRNA_LIGASE_II"/>
    <property type="match status" value="1"/>
</dbReference>
<keyword id="KW-0030">Aminoacyl-tRNA synthetase</keyword>
<keyword id="KW-0067">ATP-binding</keyword>
<keyword id="KW-0963">Cytoplasm</keyword>
<keyword id="KW-0436">Ligase</keyword>
<keyword id="KW-0547">Nucleotide-binding</keyword>
<keyword id="KW-0648">Protein biosynthesis</keyword>
<accession>B9IVA8</accession>